<comment type="function">
    <text evidence="1">Catalyzes the attachment of alanine to tRNA(Ala) in a two-step reaction: alanine is first activated by ATP to form Ala-AMP and then transferred to the acceptor end of tRNA(Ala). Also edits incorrectly charged Ser-tRNA(Ala) and Gly-tRNA(Ala) via its editing domain.</text>
</comment>
<comment type="catalytic activity">
    <reaction evidence="1">
        <text>tRNA(Ala) + L-alanine + ATP = L-alanyl-tRNA(Ala) + AMP + diphosphate</text>
        <dbReference type="Rhea" id="RHEA:12540"/>
        <dbReference type="Rhea" id="RHEA-COMP:9657"/>
        <dbReference type="Rhea" id="RHEA-COMP:9923"/>
        <dbReference type="ChEBI" id="CHEBI:30616"/>
        <dbReference type="ChEBI" id="CHEBI:33019"/>
        <dbReference type="ChEBI" id="CHEBI:57972"/>
        <dbReference type="ChEBI" id="CHEBI:78442"/>
        <dbReference type="ChEBI" id="CHEBI:78497"/>
        <dbReference type="ChEBI" id="CHEBI:456215"/>
        <dbReference type="EC" id="6.1.1.7"/>
    </reaction>
</comment>
<comment type="cofactor">
    <cofactor evidence="1">
        <name>Zn(2+)</name>
        <dbReference type="ChEBI" id="CHEBI:29105"/>
    </cofactor>
    <text evidence="1">Binds 1 zinc ion per subunit.</text>
</comment>
<comment type="subcellular location">
    <subcellularLocation>
        <location evidence="1">Cytoplasm</location>
    </subcellularLocation>
</comment>
<comment type="domain">
    <text evidence="1">Consists of three domains; the N-terminal catalytic domain, the editing domain and the C-terminal C-Ala domain. The editing domain removes incorrectly charged amino acids, while the C-Ala domain, along with tRNA(Ala), serves as a bridge to cooperatively bring together the editing and aminoacylation centers thus stimulating deacylation of misacylated tRNAs.</text>
</comment>
<comment type="similarity">
    <text evidence="1">Belongs to the class-II aminoacyl-tRNA synthetase family.</text>
</comment>
<comment type="sequence caution" evidence="2">
    <conflict type="erroneous initiation">
        <sequence resource="EMBL-CDS" id="ABB08149"/>
    </conflict>
</comment>
<name>SYA_BURL3</name>
<protein>
    <recommendedName>
        <fullName evidence="1">Alanine--tRNA ligase</fullName>
        <ecNumber evidence="1">6.1.1.7</ecNumber>
    </recommendedName>
    <alternativeName>
        <fullName evidence="1">Alanyl-tRNA synthetase</fullName>
        <shortName evidence="1">AlaRS</shortName>
    </alternativeName>
</protein>
<organism>
    <name type="scientific">Burkholderia lata (strain ATCC 17760 / DSM 23089 / LMG 22485 / NCIMB 9086 / R18194 / 383)</name>
    <dbReference type="NCBI Taxonomy" id="482957"/>
    <lineage>
        <taxon>Bacteria</taxon>
        <taxon>Pseudomonadati</taxon>
        <taxon>Pseudomonadota</taxon>
        <taxon>Betaproteobacteria</taxon>
        <taxon>Burkholderiales</taxon>
        <taxon>Burkholderiaceae</taxon>
        <taxon>Burkholderia</taxon>
        <taxon>Burkholderia cepacia complex</taxon>
    </lineage>
</organism>
<proteinExistence type="inferred from homology"/>
<reference key="1">
    <citation type="submission" date="2005-10" db="EMBL/GenBank/DDBJ databases">
        <title>Complete sequence of chromosome 1 of Burkholderia sp. 383.</title>
        <authorList>
            <consortium name="US DOE Joint Genome Institute"/>
            <person name="Copeland A."/>
            <person name="Lucas S."/>
            <person name="Lapidus A."/>
            <person name="Barry K."/>
            <person name="Detter J.C."/>
            <person name="Glavina T."/>
            <person name="Hammon N."/>
            <person name="Israni S."/>
            <person name="Pitluck S."/>
            <person name="Chain P."/>
            <person name="Malfatti S."/>
            <person name="Shin M."/>
            <person name="Vergez L."/>
            <person name="Schmutz J."/>
            <person name="Larimer F."/>
            <person name="Land M."/>
            <person name="Kyrpides N."/>
            <person name="Lykidis A."/>
            <person name="Richardson P."/>
        </authorList>
    </citation>
    <scope>NUCLEOTIDE SEQUENCE [LARGE SCALE GENOMIC DNA]</scope>
    <source>
        <strain>ATCC 17760 / DSM 23089 / LMG 22485 / NCIMB 9086 / R18194 / 383</strain>
    </source>
</reference>
<accession>Q39HB7</accession>
<sequence length="874" mass="95520">MKAAEIREKFLKFFESKGHTIVRSSSLVPGNDPTLMFTNSGMVQFKDVFLGTDPRPYSRATTAQRSVRAGGKHNDLENVGYTARHHTFFEMLGNFSFGDYFKHDAIKFAWELLTTVYQLPKDKLWVTVYQEDDEAYDIWAKEVGVPTERIIRIGDNKGARYASDNFWTMGDTGPCGPCTEIFYDHGPDVWGGPPGSPEEDGDRYIEIWNLVFMQFNRDAQGNMTRLPKQSVDTGMGLERLAAVLQHVHSNYEIDLFQNLIKAAARVTEISDLTNNSLKVIADHIRACSFLIVDGVIPGNEGRGYVLRRIVRRAIRHGYKLGRKGSFFHKLVADLVAEMGVAYPELKEAEQRVTDVLRQEEERFFETIEHGMSILEGALADVEAKGGKVLDGELAFKLHDTYGFPLDLTADVCRERGMTVDEPAFDDAMARQREQARAAGKFKAAQGLEYTGAKTTFHGYEEIAFDDAKIVALYVDGSSVNEVKTGQDAVVVLDHTPFYAESGGQVGDQGVLANAATRFAVADTLKVQADVIGHHGTLEQGTLKVGDVLRAEIDAHRRARTQRNHSATHLMHKALREVLGAHVQQKGSLVDAEKTRFDFAHNAPMTDDEIRRVEQIVNNEILANAPGIVRVMPYDEAVKGGAMALFGEKYGDEVRVLDLGFSRELCGGTHVSRSGDIGFFKIVVEGGVAAGIRRVEAITGDNAVRYVQELDARVNEAAAALKAQPSELTQRIAQVQDQVKSLEKELGALKSKLASSQGDELAQQAVEIGGVFVLAATLDGADAKTLRETVDKLKDKLKSAAIVLAAVESGKVSLIAGVTPDASKKVKAGELVNFVAQQVGGKGGGRPDMAQAGGTEPANLPGALAGVKGWVEERL</sequence>
<dbReference type="EC" id="6.1.1.7" evidence="1"/>
<dbReference type="EMBL" id="CP000151">
    <property type="protein sequence ID" value="ABB08149.1"/>
    <property type="status" value="ALT_INIT"/>
    <property type="molecule type" value="Genomic_DNA"/>
</dbReference>
<dbReference type="RefSeq" id="WP_041492808.1">
    <property type="nucleotide sequence ID" value="NC_007510.1"/>
</dbReference>
<dbReference type="SMR" id="Q39HB7"/>
<dbReference type="GeneID" id="45094448"/>
<dbReference type="KEGG" id="bur:Bcep18194_A4553"/>
<dbReference type="PATRIC" id="fig|482957.22.peg.1457"/>
<dbReference type="HOGENOM" id="CLU_004485_1_1_4"/>
<dbReference type="Proteomes" id="UP000002705">
    <property type="component" value="Chromosome 1"/>
</dbReference>
<dbReference type="GO" id="GO:0005829">
    <property type="term" value="C:cytosol"/>
    <property type="evidence" value="ECO:0007669"/>
    <property type="project" value="TreeGrafter"/>
</dbReference>
<dbReference type="GO" id="GO:0004813">
    <property type="term" value="F:alanine-tRNA ligase activity"/>
    <property type="evidence" value="ECO:0007669"/>
    <property type="project" value="UniProtKB-UniRule"/>
</dbReference>
<dbReference type="GO" id="GO:0002161">
    <property type="term" value="F:aminoacyl-tRNA deacylase activity"/>
    <property type="evidence" value="ECO:0007669"/>
    <property type="project" value="TreeGrafter"/>
</dbReference>
<dbReference type="GO" id="GO:0005524">
    <property type="term" value="F:ATP binding"/>
    <property type="evidence" value="ECO:0007669"/>
    <property type="project" value="UniProtKB-UniRule"/>
</dbReference>
<dbReference type="GO" id="GO:0000049">
    <property type="term" value="F:tRNA binding"/>
    <property type="evidence" value="ECO:0007669"/>
    <property type="project" value="UniProtKB-KW"/>
</dbReference>
<dbReference type="GO" id="GO:0008270">
    <property type="term" value="F:zinc ion binding"/>
    <property type="evidence" value="ECO:0007669"/>
    <property type="project" value="UniProtKB-UniRule"/>
</dbReference>
<dbReference type="GO" id="GO:0006419">
    <property type="term" value="P:alanyl-tRNA aminoacylation"/>
    <property type="evidence" value="ECO:0007669"/>
    <property type="project" value="UniProtKB-UniRule"/>
</dbReference>
<dbReference type="GO" id="GO:0045892">
    <property type="term" value="P:negative regulation of DNA-templated transcription"/>
    <property type="evidence" value="ECO:0007669"/>
    <property type="project" value="TreeGrafter"/>
</dbReference>
<dbReference type="CDD" id="cd00673">
    <property type="entry name" value="AlaRS_core"/>
    <property type="match status" value="1"/>
</dbReference>
<dbReference type="FunFam" id="2.40.30.130:FF:000001">
    <property type="entry name" value="Alanine--tRNA ligase"/>
    <property type="match status" value="1"/>
</dbReference>
<dbReference type="FunFam" id="3.10.310.40:FF:000001">
    <property type="entry name" value="Alanine--tRNA ligase"/>
    <property type="match status" value="1"/>
</dbReference>
<dbReference type="FunFam" id="3.30.54.20:FF:000001">
    <property type="entry name" value="Alanine--tRNA ligase"/>
    <property type="match status" value="1"/>
</dbReference>
<dbReference type="FunFam" id="3.30.930.10:FF:000004">
    <property type="entry name" value="Alanine--tRNA ligase"/>
    <property type="match status" value="1"/>
</dbReference>
<dbReference type="FunFam" id="3.30.980.10:FF:000004">
    <property type="entry name" value="Alanine--tRNA ligase, cytoplasmic"/>
    <property type="match status" value="1"/>
</dbReference>
<dbReference type="Gene3D" id="2.40.30.130">
    <property type="match status" value="1"/>
</dbReference>
<dbReference type="Gene3D" id="3.10.310.40">
    <property type="match status" value="1"/>
</dbReference>
<dbReference type="Gene3D" id="3.30.54.20">
    <property type="match status" value="1"/>
</dbReference>
<dbReference type="Gene3D" id="6.10.250.550">
    <property type="match status" value="1"/>
</dbReference>
<dbReference type="Gene3D" id="3.30.930.10">
    <property type="entry name" value="Bira Bifunctional Protein, Domain 2"/>
    <property type="match status" value="1"/>
</dbReference>
<dbReference type="Gene3D" id="3.30.980.10">
    <property type="entry name" value="Threonyl-trna Synthetase, Chain A, domain 2"/>
    <property type="match status" value="1"/>
</dbReference>
<dbReference type="HAMAP" id="MF_00036_B">
    <property type="entry name" value="Ala_tRNA_synth_B"/>
    <property type="match status" value="1"/>
</dbReference>
<dbReference type="InterPro" id="IPR045864">
    <property type="entry name" value="aa-tRNA-synth_II/BPL/LPL"/>
</dbReference>
<dbReference type="InterPro" id="IPR002318">
    <property type="entry name" value="Ala-tRNA-lgiase_IIc"/>
</dbReference>
<dbReference type="InterPro" id="IPR018162">
    <property type="entry name" value="Ala-tRNA-ligase_IIc_anticod-bd"/>
</dbReference>
<dbReference type="InterPro" id="IPR018165">
    <property type="entry name" value="Ala-tRNA-synth_IIc_core"/>
</dbReference>
<dbReference type="InterPro" id="IPR018164">
    <property type="entry name" value="Ala-tRNA-synth_IIc_N"/>
</dbReference>
<dbReference type="InterPro" id="IPR050058">
    <property type="entry name" value="Ala-tRNA_ligase"/>
</dbReference>
<dbReference type="InterPro" id="IPR023033">
    <property type="entry name" value="Ala_tRNA_ligase_euk/bac"/>
</dbReference>
<dbReference type="InterPro" id="IPR003156">
    <property type="entry name" value="DHHA1_dom"/>
</dbReference>
<dbReference type="InterPro" id="IPR018163">
    <property type="entry name" value="Thr/Ala-tRNA-synth_IIc_edit"/>
</dbReference>
<dbReference type="InterPro" id="IPR009000">
    <property type="entry name" value="Transl_B-barrel_sf"/>
</dbReference>
<dbReference type="InterPro" id="IPR012947">
    <property type="entry name" value="tRNA_SAD"/>
</dbReference>
<dbReference type="NCBIfam" id="TIGR00344">
    <property type="entry name" value="alaS"/>
    <property type="match status" value="1"/>
</dbReference>
<dbReference type="PANTHER" id="PTHR11777:SF9">
    <property type="entry name" value="ALANINE--TRNA LIGASE, CYTOPLASMIC"/>
    <property type="match status" value="1"/>
</dbReference>
<dbReference type="PANTHER" id="PTHR11777">
    <property type="entry name" value="ALANYL-TRNA SYNTHETASE"/>
    <property type="match status" value="1"/>
</dbReference>
<dbReference type="Pfam" id="PF02272">
    <property type="entry name" value="DHHA1"/>
    <property type="match status" value="1"/>
</dbReference>
<dbReference type="Pfam" id="PF01411">
    <property type="entry name" value="tRNA-synt_2c"/>
    <property type="match status" value="1"/>
</dbReference>
<dbReference type="Pfam" id="PF07973">
    <property type="entry name" value="tRNA_SAD"/>
    <property type="match status" value="1"/>
</dbReference>
<dbReference type="PRINTS" id="PR00980">
    <property type="entry name" value="TRNASYNTHALA"/>
</dbReference>
<dbReference type="SMART" id="SM00863">
    <property type="entry name" value="tRNA_SAD"/>
    <property type="match status" value="1"/>
</dbReference>
<dbReference type="SUPFAM" id="SSF55681">
    <property type="entry name" value="Class II aaRS and biotin synthetases"/>
    <property type="match status" value="1"/>
</dbReference>
<dbReference type="SUPFAM" id="SSF101353">
    <property type="entry name" value="Putative anticodon-binding domain of alanyl-tRNA synthetase (AlaRS)"/>
    <property type="match status" value="1"/>
</dbReference>
<dbReference type="SUPFAM" id="SSF55186">
    <property type="entry name" value="ThrRS/AlaRS common domain"/>
    <property type="match status" value="1"/>
</dbReference>
<dbReference type="SUPFAM" id="SSF50447">
    <property type="entry name" value="Translation proteins"/>
    <property type="match status" value="1"/>
</dbReference>
<dbReference type="PROSITE" id="PS50860">
    <property type="entry name" value="AA_TRNA_LIGASE_II_ALA"/>
    <property type="match status" value="1"/>
</dbReference>
<evidence type="ECO:0000255" key="1">
    <source>
        <dbReference type="HAMAP-Rule" id="MF_00036"/>
    </source>
</evidence>
<evidence type="ECO:0000305" key="2"/>
<feature type="chain" id="PRO_0000347533" description="Alanine--tRNA ligase">
    <location>
        <begin position="1"/>
        <end position="874"/>
    </location>
</feature>
<feature type="binding site" evidence="1">
    <location>
        <position position="564"/>
    </location>
    <ligand>
        <name>Zn(2+)</name>
        <dbReference type="ChEBI" id="CHEBI:29105"/>
    </ligand>
</feature>
<feature type="binding site" evidence="1">
    <location>
        <position position="568"/>
    </location>
    <ligand>
        <name>Zn(2+)</name>
        <dbReference type="ChEBI" id="CHEBI:29105"/>
    </ligand>
</feature>
<feature type="binding site" evidence="1">
    <location>
        <position position="665"/>
    </location>
    <ligand>
        <name>Zn(2+)</name>
        <dbReference type="ChEBI" id="CHEBI:29105"/>
    </ligand>
</feature>
<feature type="binding site" evidence="1">
    <location>
        <position position="669"/>
    </location>
    <ligand>
        <name>Zn(2+)</name>
        <dbReference type="ChEBI" id="CHEBI:29105"/>
    </ligand>
</feature>
<gene>
    <name evidence="1" type="primary">alaS</name>
    <name type="ordered locus">Bcep18194_A4553</name>
</gene>
<keyword id="KW-0030">Aminoacyl-tRNA synthetase</keyword>
<keyword id="KW-0067">ATP-binding</keyword>
<keyword id="KW-0963">Cytoplasm</keyword>
<keyword id="KW-0436">Ligase</keyword>
<keyword id="KW-0479">Metal-binding</keyword>
<keyword id="KW-0547">Nucleotide-binding</keyword>
<keyword id="KW-0648">Protein biosynthesis</keyword>
<keyword id="KW-0694">RNA-binding</keyword>
<keyword id="KW-0820">tRNA-binding</keyword>
<keyword id="KW-0862">Zinc</keyword>